<dbReference type="EC" id="2.5.1.75" evidence="1"/>
<dbReference type="EMBL" id="BA000039">
    <property type="protein sequence ID" value="BAC08199.1"/>
    <property type="molecule type" value="Genomic_DNA"/>
</dbReference>
<dbReference type="RefSeq" id="NP_681437.1">
    <property type="nucleotide sequence ID" value="NC_004113.1"/>
</dbReference>
<dbReference type="RefSeq" id="WP_011056495.1">
    <property type="nucleotide sequence ID" value="NC_004113.1"/>
</dbReference>
<dbReference type="SMR" id="Q8CWM5"/>
<dbReference type="STRING" id="197221.gene:10747238"/>
<dbReference type="EnsemblBacteria" id="BAC08199">
    <property type="protein sequence ID" value="BAC08199"/>
    <property type="gene ID" value="BAC08199"/>
</dbReference>
<dbReference type="KEGG" id="tel:tlr0648"/>
<dbReference type="PATRIC" id="fig|197221.4.peg.687"/>
<dbReference type="eggNOG" id="COG0324">
    <property type="taxonomic scope" value="Bacteria"/>
</dbReference>
<dbReference type="Proteomes" id="UP000000440">
    <property type="component" value="Chromosome"/>
</dbReference>
<dbReference type="GO" id="GO:0005524">
    <property type="term" value="F:ATP binding"/>
    <property type="evidence" value="ECO:0007669"/>
    <property type="project" value="UniProtKB-UniRule"/>
</dbReference>
<dbReference type="GO" id="GO:0052381">
    <property type="term" value="F:tRNA dimethylallyltransferase activity"/>
    <property type="evidence" value="ECO:0007669"/>
    <property type="project" value="UniProtKB-UniRule"/>
</dbReference>
<dbReference type="GO" id="GO:0006400">
    <property type="term" value="P:tRNA modification"/>
    <property type="evidence" value="ECO:0007669"/>
    <property type="project" value="TreeGrafter"/>
</dbReference>
<dbReference type="Gene3D" id="1.10.20.140">
    <property type="match status" value="1"/>
</dbReference>
<dbReference type="Gene3D" id="3.40.50.300">
    <property type="entry name" value="P-loop containing nucleotide triphosphate hydrolases"/>
    <property type="match status" value="1"/>
</dbReference>
<dbReference type="HAMAP" id="MF_00185">
    <property type="entry name" value="IPP_trans"/>
    <property type="match status" value="1"/>
</dbReference>
<dbReference type="InterPro" id="IPR039657">
    <property type="entry name" value="Dimethylallyltransferase"/>
</dbReference>
<dbReference type="InterPro" id="IPR018022">
    <property type="entry name" value="IPT"/>
</dbReference>
<dbReference type="InterPro" id="IPR027417">
    <property type="entry name" value="P-loop_NTPase"/>
</dbReference>
<dbReference type="NCBIfam" id="TIGR00174">
    <property type="entry name" value="miaA"/>
    <property type="match status" value="1"/>
</dbReference>
<dbReference type="PANTHER" id="PTHR11088">
    <property type="entry name" value="TRNA DIMETHYLALLYLTRANSFERASE"/>
    <property type="match status" value="1"/>
</dbReference>
<dbReference type="PANTHER" id="PTHR11088:SF60">
    <property type="entry name" value="TRNA DIMETHYLALLYLTRANSFERASE"/>
    <property type="match status" value="1"/>
</dbReference>
<dbReference type="Pfam" id="PF01715">
    <property type="entry name" value="IPPT"/>
    <property type="match status" value="1"/>
</dbReference>
<dbReference type="SUPFAM" id="SSF52540">
    <property type="entry name" value="P-loop containing nucleoside triphosphate hydrolases"/>
    <property type="match status" value="1"/>
</dbReference>
<protein>
    <recommendedName>
        <fullName evidence="1">tRNA dimethylallyltransferase</fullName>
        <ecNumber evidence="1">2.5.1.75</ecNumber>
    </recommendedName>
    <alternativeName>
        <fullName evidence="1">Dimethylallyl diphosphate:tRNA dimethylallyltransferase</fullName>
        <shortName evidence="1">DMAPP:tRNA dimethylallyltransferase</shortName>
        <shortName evidence="1">DMATase</shortName>
    </alternativeName>
    <alternativeName>
        <fullName evidence="1">Isopentenyl-diphosphate:tRNA isopentenyltransferase</fullName>
        <shortName evidence="1">IPP transferase</shortName>
        <shortName evidence="1">IPPT</shortName>
        <shortName evidence="1">IPTase</shortName>
    </alternativeName>
</protein>
<name>MIAA_THEVB</name>
<proteinExistence type="inferred from homology"/>
<organism>
    <name type="scientific">Thermosynechococcus vestitus (strain NIES-2133 / IAM M-273 / BP-1)</name>
    <dbReference type="NCBI Taxonomy" id="197221"/>
    <lineage>
        <taxon>Bacteria</taxon>
        <taxon>Bacillati</taxon>
        <taxon>Cyanobacteriota</taxon>
        <taxon>Cyanophyceae</taxon>
        <taxon>Acaryochloridales</taxon>
        <taxon>Thermosynechococcaceae</taxon>
        <taxon>Thermosynechococcus</taxon>
    </lineage>
</organism>
<feature type="chain" id="PRO_0000163992" description="tRNA dimethylallyltransferase">
    <location>
        <begin position="1"/>
        <end position="312"/>
    </location>
</feature>
<feature type="region of interest" description="Interaction with substrate tRNA" evidence="1">
    <location>
        <begin position="36"/>
        <end position="39"/>
    </location>
</feature>
<feature type="binding site" evidence="1">
    <location>
        <begin position="11"/>
        <end position="18"/>
    </location>
    <ligand>
        <name>ATP</name>
        <dbReference type="ChEBI" id="CHEBI:30616"/>
    </ligand>
</feature>
<feature type="binding site" evidence="1">
    <location>
        <begin position="13"/>
        <end position="18"/>
    </location>
    <ligand>
        <name>substrate</name>
    </ligand>
</feature>
<feature type="site" description="Interaction with substrate tRNA" evidence="1">
    <location>
        <position position="102"/>
    </location>
</feature>
<sequence length="312" mass="35273">MGDAGLIVIGGATATGKTALAIALAQQLNSVILSADSRQVYRGFDIGTAKPTPAQQQQVRHHLIDICDPRETLTLAIYQAKAQALIAHYHAQGITPLLVGGTGLYIRSITQGLTMPQVPPQPHLRAQLMALGQQECYQWLQQVDPVAAQRIHAHDQVRTLRALEVYYTTGVPLSQQQRREPPPYRIWYFALTGGDRQQERCRIEARTQEMLAMGWLDEIQQLQRQYGEDLPLLDTLGYREMRQYLRGEVTLAEAIALTVQHTQQFAKRQRTWFRAEPDIHWLQATTLEAQLAEIQAQFTLCPKTTATKRRMS</sequence>
<accession>Q8CWM5</accession>
<comment type="function">
    <text evidence="1">Catalyzes the transfer of a dimethylallyl group onto the adenine at position 37 in tRNAs that read codons beginning with uridine, leading to the formation of N6-(dimethylallyl)adenosine (i(6)A).</text>
</comment>
<comment type="catalytic activity">
    <reaction evidence="1">
        <text>adenosine(37) in tRNA + dimethylallyl diphosphate = N(6)-dimethylallyladenosine(37) in tRNA + diphosphate</text>
        <dbReference type="Rhea" id="RHEA:26482"/>
        <dbReference type="Rhea" id="RHEA-COMP:10162"/>
        <dbReference type="Rhea" id="RHEA-COMP:10375"/>
        <dbReference type="ChEBI" id="CHEBI:33019"/>
        <dbReference type="ChEBI" id="CHEBI:57623"/>
        <dbReference type="ChEBI" id="CHEBI:74411"/>
        <dbReference type="ChEBI" id="CHEBI:74415"/>
        <dbReference type="EC" id="2.5.1.75"/>
    </reaction>
</comment>
<comment type="cofactor">
    <cofactor evidence="1">
        <name>Mg(2+)</name>
        <dbReference type="ChEBI" id="CHEBI:18420"/>
    </cofactor>
</comment>
<comment type="subunit">
    <text evidence="1">Monomer.</text>
</comment>
<comment type="similarity">
    <text evidence="1">Belongs to the IPP transferase family.</text>
</comment>
<reference key="1">
    <citation type="journal article" date="2002" name="DNA Res.">
        <title>Complete genome structure of the thermophilic cyanobacterium Thermosynechococcus elongatus BP-1.</title>
        <authorList>
            <person name="Nakamura Y."/>
            <person name="Kaneko T."/>
            <person name="Sato S."/>
            <person name="Ikeuchi M."/>
            <person name="Katoh H."/>
            <person name="Sasamoto S."/>
            <person name="Watanabe A."/>
            <person name="Iriguchi M."/>
            <person name="Kawashima K."/>
            <person name="Kimura T."/>
            <person name="Kishida Y."/>
            <person name="Kiyokawa C."/>
            <person name="Kohara M."/>
            <person name="Matsumoto M."/>
            <person name="Matsuno A."/>
            <person name="Nakazaki N."/>
            <person name="Shimpo S."/>
            <person name="Sugimoto M."/>
            <person name="Takeuchi C."/>
            <person name="Yamada M."/>
            <person name="Tabata S."/>
        </authorList>
    </citation>
    <scope>NUCLEOTIDE SEQUENCE [LARGE SCALE GENOMIC DNA]</scope>
    <source>
        <strain>NIES-2133 / IAM M-273 / BP-1</strain>
    </source>
</reference>
<keyword id="KW-0067">ATP-binding</keyword>
<keyword id="KW-0460">Magnesium</keyword>
<keyword id="KW-0547">Nucleotide-binding</keyword>
<keyword id="KW-1185">Reference proteome</keyword>
<keyword id="KW-0808">Transferase</keyword>
<keyword id="KW-0819">tRNA processing</keyword>
<gene>
    <name evidence="1" type="primary">miaA</name>
    <name type="ordered locus">tlr0648</name>
</gene>
<evidence type="ECO:0000255" key="1">
    <source>
        <dbReference type="HAMAP-Rule" id="MF_00185"/>
    </source>
</evidence>